<accession>Q2FW16</accession>
<organism>
    <name type="scientific">Staphylococcus aureus (strain NCTC 8325 / PS 47)</name>
    <dbReference type="NCBI Taxonomy" id="93061"/>
    <lineage>
        <taxon>Bacteria</taxon>
        <taxon>Bacillati</taxon>
        <taxon>Bacillota</taxon>
        <taxon>Bacilli</taxon>
        <taxon>Bacillales</taxon>
        <taxon>Staphylococcaceae</taxon>
        <taxon>Staphylococcus</taxon>
    </lineage>
</organism>
<evidence type="ECO:0000255" key="1">
    <source>
        <dbReference type="HAMAP-Rule" id="MF_01367"/>
    </source>
</evidence>
<evidence type="ECO:0000305" key="2"/>
<evidence type="ECO:0007829" key="3">
    <source>
        <dbReference type="PDB" id="6DDG"/>
    </source>
</evidence>
<evidence type="ECO:0007829" key="4">
    <source>
        <dbReference type="PDB" id="6SJ5"/>
    </source>
</evidence>
<evidence type="ECO:0007829" key="5">
    <source>
        <dbReference type="PDB" id="6WQQ"/>
    </source>
</evidence>
<evidence type="ECO:0007829" key="6">
    <source>
        <dbReference type="PDB" id="7ASM"/>
    </source>
</evidence>
<evidence type="ECO:0007829" key="7">
    <source>
        <dbReference type="PDB" id="7ASN"/>
    </source>
</evidence>
<evidence type="ECO:0007829" key="8">
    <source>
        <dbReference type="PDB" id="7TTW"/>
    </source>
</evidence>
<name>RL14_STAA8</name>
<proteinExistence type="evidence at protein level"/>
<comment type="function">
    <text evidence="1">Binds to 23S rRNA. Forms part of two intersubunit bridges in the 70S ribosome.</text>
</comment>
<comment type="subunit">
    <text evidence="1">Part of the 50S ribosomal subunit. Forms a cluster with proteins L3 and L19. In the 70S ribosome, L14 and L19 interact and together make contacts with the 16S rRNA in bridges B5 and B8.</text>
</comment>
<comment type="similarity">
    <text evidence="1">Belongs to the universal ribosomal protein uL14 family.</text>
</comment>
<dbReference type="EMBL" id="CP000253">
    <property type="protein sequence ID" value="ABD31520.1"/>
    <property type="molecule type" value="Genomic_DNA"/>
</dbReference>
<dbReference type="RefSeq" id="WP_000615921.1">
    <property type="nucleotide sequence ID" value="NZ_LS483365.1"/>
</dbReference>
<dbReference type="RefSeq" id="YP_500969.1">
    <property type="nucleotide sequence ID" value="NC_007795.1"/>
</dbReference>
<dbReference type="PDB" id="4WCE">
    <property type="method" value="X-ray"/>
    <property type="resolution" value="3.53 A"/>
    <property type="chains" value="H=1-122"/>
</dbReference>
<dbReference type="PDB" id="4WF9">
    <property type="method" value="X-ray"/>
    <property type="resolution" value="3.43 A"/>
    <property type="chains" value="H=1-122"/>
</dbReference>
<dbReference type="PDB" id="4WFA">
    <property type="method" value="X-ray"/>
    <property type="resolution" value="3.39 A"/>
    <property type="chains" value="H=1-122"/>
</dbReference>
<dbReference type="PDB" id="4WFB">
    <property type="method" value="X-ray"/>
    <property type="resolution" value="3.43 A"/>
    <property type="chains" value="H=1-122"/>
</dbReference>
<dbReference type="PDB" id="5HKV">
    <property type="method" value="X-ray"/>
    <property type="resolution" value="3.66 A"/>
    <property type="chains" value="H=1-122"/>
</dbReference>
<dbReference type="PDB" id="5HL7">
    <property type="method" value="X-ray"/>
    <property type="resolution" value="3.55 A"/>
    <property type="chains" value="H=1-122"/>
</dbReference>
<dbReference type="PDB" id="5LI0">
    <property type="method" value="EM"/>
    <property type="resolution" value="3.80 A"/>
    <property type="chains" value="N=1-122"/>
</dbReference>
<dbReference type="PDB" id="5ND8">
    <property type="method" value="EM"/>
    <property type="resolution" value="3.70 A"/>
    <property type="chains" value="N=1-122"/>
</dbReference>
<dbReference type="PDB" id="5ND9">
    <property type="method" value="EM"/>
    <property type="resolution" value="3.70 A"/>
    <property type="chains" value="N=1-122"/>
</dbReference>
<dbReference type="PDB" id="5NRG">
    <property type="method" value="X-ray"/>
    <property type="resolution" value="3.44 A"/>
    <property type="chains" value="H=1-122"/>
</dbReference>
<dbReference type="PDB" id="5TCU">
    <property type="method" value="EM"/>
    <property type="resolution" value="3.90 A"/>
    <property type="chains" value="LN=1-122"/>
</dbReference>
<dbReference type="PDB" id="6DDD">
    <property type="method" value="EM"/>
    <property type="resolution" value="3.10 A"/>
    <property type="chains" value="W=1-122"/>
</dbReference>
<dbReference type="PDB" id="6DDG">
    <property type="method" value="EM"/>
    <property type="resolution" value="3.10 A"/>
    <property type="chains" value="W=1-122"/>
</dbReference>
<dbReference type="PDB" id="6HMA">
    <property type="method" value="EM"/>
    <property type="resolution" value="2.65 A"/>
    <property type="chains" value="I=1-122"/>
</dbReference>
<dbReference type="PDB" id="6SJ5">
    <property type="method" value="X-ray"/>
    <property type="resolution" value="2.27 A"/>
    <property type="chains" value="C/D=1-122"/>
</dbReference>
<dbReference type="PDB" id="6SJ6">
    <property type="method" value="EM"/>
    <property type="resolution" value="3.23 A"/>
    <property type="chains" value="N=1-122"/>
</dbReference>
<dbReference type="PDB" id="6WQN">
    <property type="method" value="EM"/>
    <property type="resolution" value="2.90 A"/>
    <property type="chains" value="W=1-122"/>
</dbReference>
<dbReference type="PDB" id="6WQQ">
    <property type="method" value="EM"/>
    <property type="resolution" value="3.10 A"/>
    <property type="chains" value="W=1-122"/>
</dbReference>
<dbReference type="PDB" id="6WRS">
    <property type="method" value="EM"/>
    <property type="resolution" value="3.20 A"/>
    <property type="chains" value="W=1-122"/>
</dbReference>
<dbReference type="PDB" id="6WRU">
    <property type="method" value="EM"/>
    <property type="resolution" value="3.10 A"/>
    <property type="chains" value="W=1-122"/>
</dbReference>
<dbReference type="PDB" id="6YEF">
    <property type="method" value="EM"/>
    <property type="resolution" value="3.20 A"/>
    <property type="chains" value="N=1-122"/>
</dbReference>
<dbReference type="PDB" id="7ASM">
    <property type="method" value="EM"/>
    <property type="resolution" value="2.48 A"/>
    <property type="chains" value="I=1-122"/>
</dbReference>
<dbReference type="PDB" id="7ASN">
    <property type="method" value="EM"/>
    <property type="resolution" value="2.73 A"/>
    <property type="chains" value="G=1-122"/>
</dbReference>
<dbReference type="PDB" id="7NHL">
    <property type="method" value="EM"/>
    <property type="resolution" value="3.10 A"/>
    <property type="chains" value="N=1-122"/>
</dbReference>
<dbReference type="PDB" id="7NHM">
    <property type="method" value="EM"/>
    <property type="resolution" value="3.10 A"/>
    <property type="chains" value="N=1-122"/>
</dbReference>
<dbReference type="PDB" id="7TTU">
    <property type="method" value="EM"/>
    <property type="resolution" value="3.00 A"/>
    <property type="chains" value="W=1-122"/>
</dbReference>
<dbReference type="PDB" id="7TTW">
    <property type="method" value="EM"/>
    <property type="resolution" value="2.90 A"/>
    <property type="chains" value="W=1-122"/>
</dbReference>
<dbReference type="PDB" id="8P2F">
    <property type="method" value="EM"/>
    <property type="resolution" value="2.44 A"/>
    <property type="chains" value="N=1-122"/>
</dbReference>
<dbReference type="PDB" id="8P2G">
    <property type="method" value="EM"/>
    <property type="resolution" value="2.02 A"/>
    <property type="chains" value="N=1-122"/>
</dbReference>
<dbReference type="PDB" id="8P2H">
    <property type="method" value="EM"/>
    <property type="resolution" value="2.49 A"/>
    <property type="chains" value="N=1-122"/>
</dbReference>
<dbReference type="PDBsum" id="4WCE"/>
<dbReference type="PDBsum" id="4WF9"/>
<dbReference type="PDBsum" id="4WFA"/>
<dbReference type="PDBsum" id="4WFB"/>
<dbReference type="PDBsum" id="5HKV"/>
<dbReference type="PDBsum" id="5HL7"/>
<dbReference type="PDBsum" id="5LI0"/>
<dbReference type="PDBsum" id="5ND8"/>
<dbReference type="PDBsum" id="5ND9"/>
<dbReference type="PDBsum" id="5NRG"/>
<dbReference type="PDBsum" id="5TCU"/>
<dbReference type="PDBsum" id="6DDD"/>
<dbReference type="PDBsum" id="6DDG"/>
<dbReference type="PDBsum" id="6HMA"/>
<dbReference type="PDBsum" id="6SJ5"/>
<dbReference type="PDBsum" id="6SJ6"/>
<dbReference type="PDBsum" id="6WQN"/>
<dbReference type="PDBsum" id="6WQQ"/>
<dbReference type="PDBsum" id="6WRS"/>
<dbReference type="PDBsum" id="6WRU"/>
<dbReference type="PDBsum" id="6YEF"/>
<dbReference type="PDBsum" id="7ASM"/>
<dbReference type="PDBsum" id="7ASN"/>
<dbReference type="PDBsum" id="7NHL"/>
<dbReference type="PDBsum" id="7NHM"/>
<dbReference type="PDBsum" id="7TTU"/>
<dbReference type="PDBsum" id="7TTW"/>
<dbReference type="PDBsum" id="8P2F"/>
<dbReference type="PDBsum" id="8P2G"/>
<dbReference type="PDBsum" id="8P2H"/>
<dbReference type="EMDB" id="EMD-10212"/>
<dbReference type="EMDB" id="EMD-10791"/>
<dbReference type="EMDB" id="EMD-12332"/>
<dbReference type="EMDB" id="EMD-12333"/>
<dbReference type="EMDB" id="EMD-17363"/>
<dbReference type="EMDB" id="EMD-17364"/>
<dbReference type="EMDB" id="EMD-17365"/>
<dbReference type="EMDB" id="EMD-3624"/>
<dbReference type="EMDB" id="EMD-3625"/>
<dbReference type="EMDB" id="EMD-4050"/>
<dbReference type="EMDB" id="EMD-8402"/>
<dbReference type="SMR" id="Q2FW16"/>
<dbReference type="IntAct" id="Q2FW16">
    <property type="interactions" value="1"/>
</dbReference>
<dbReference type="STRING" id="93061.SAOUHSC_02502"/>
<dbReference type="PaxDb" id="1280-SAXN108_2489"/>
<dbReference type="GeneID" id="3920878"/>
<dbReference type="GeneID" id="98346552"/>
<dbReference type="KEGG" id="sao:SAOUHSC_02502"/>
<dbReference type="PATRIC" id="fig|93061.5.peg.2257"/>
<dbReference type="eggNOG" id="COG0093">
    <property type="taxonomic scope" value="Bacteria"/>
</dbReference>
<dbReference type="HOGENOM" id="CLU_095071_2_1_9"/>
<dbReference type="OrthoDB" id="9806379at2"/>
<dbReference type="EvolutionaryTrace" id="Q2FW16"/>
<dbReference type="PRO" id="PR:Q2FW16"/>
<dbReference type="Proteomes" id="UP000008816">
    <property type="component" value="Chromosome"/>
</dbReference>
<dbReference type="GO" id="GO:0022625">
    <property type="term" value="C:cytosolic large ribosomal subunit"/>
    <property type="evidence" value="ECO:0000318"/>
    <property type="project" value="GO_Central"/>
</dbReference>
<dbReference type="GO" id="GO:0070180">
    <property type="term" value="F:large ribosomal subunit rRNA binding"/>
    <property type="evidence" value="ECO:0000318"/>
    <property type="project" value="GO_Central"/>
</dbReference>
<dbReference type="GO" id="GO:0003735">
    <property type="term" value="F:structural constituent of ribosome"/>
    <property type="evidence" value="ECO:0000318"/>
    <property type="project" value="GO_Central"/>
</dbReference>
<dbReference type="GO" id="GO:0006412">
    <property type="term" value="P:translation"/>
    <property type="evidence" value="ECO:0007669"/>
    <property type="project" value="UniProtKB-UniRule"/>
</dbReference>
<dbReference type="CDD" id="cd00337">
    <property type="entry name" value="Ribosomal_uL14"/>
    <property type="match status" value="1"/>
</dbReference>
<dbReference type="FunFam" id="2.40.150.20:FF:000001">
    <property type="entry name" value="50S ribosomal protein L14"/>
    <property type="match status" value="1"/>
</dbReference>
<dbReference type="Gene3D" id="2.40.150.20">
    <property type="entry name" value="Ribosomal protein L14"/>
    <property type="match status" value="1"/>
</dbReference>
<dbReference type="HAMAP" id="MF_01367">
    <property type="entry name" value="Ribosomal_uL14"/>
    <property type="match status" value="1"/>
</dbReference>
<dbReference type="InterPro" id="IPR000218">
    <property type="entry name" value="Ribosomal_uL14"/>
</dbReference>
<dbReference type="InterPro" id="IPR005745">
    <property type="entry name" value="Ribosomal_uL14_bac-type"/>
</dbReference>
<dbReference type="InterPro" id="IPR019972">
    <property type="entry name" value="Ribosomal_uL14_CS"/>
</dbReference>
<dbReference type="InterPro" id="IPR036853">
    <property type="entry name" value="Ribosomal_uL14_sf"/>
</dbReference>
<dbReference type="NCBIfam" id="TIGR01067">
    <property type="entry name" value="rplN_bact"/>
    <property type="match status" value="1"/>
</dbReference>
<dbReference type="PANTHER" id="PTHR11761">
    <property type="entry name" value="50S/60S RIBOSOMAL PROTEIN L14/L23"/>
    <property type="match status" value="1"/>
</dbReference>
<dbReference type="PANTHER" id="PTHR11761:SF3">
    <property type="entry name" value="LARGE RIBOSOMAL SUBUNIT PROTEIN UL14M"/>
    <property type="match status" value="1"/>
</dbReference>
<dbReference type="Pfam" id="PF00238">
    <property type="entry name" value="Ribosomal_L14"/>
    <property type="match status" value="1"/>
</dbReference>
<dbReference type="SMART" id="SM01374">
    <property type="entry name" value="Ribosomal_L14"/>
    <property type="match status" value="1"/>
</dbReference>
<dbReference type="SUPFAM" id="SSF50193">
    <property type="entry name" value="Ribosomal protein L14"/>
    <property type="match status" value="1"/>
</dbReference>
<dbReference type="PROSITE" id="PS00049">
    <property type="entry name" value="RIBOSOMAL_L14"/>
    <property type="match status" value="1"/>
</dbReference>
<feature type="chain" id="PRO_1000055707" description="Large ribosomal subunit protein uL14">
    <location>
        <begin position="1"/>
        <end position="122"/>
    </location>
</feature>
<feature type="strand" evidence="8">
    <location>
        <begin position="3"/>
        <end position="5"/>
    </location>
</feature>
<feature type="strand" evidence="4">
    <location>
        <begin position="7"/>
        <end position="10"/>
    </location>
</feature>
<feature type="strand" evidence="4">
    <location>
        <begin position="12"/>
        <end position="24"/>
    </location>
</feature>
<feature type="strand" evidence="5">
    <location>
        <begin position="26"/>
        <end position="29"/>
    </location>
</feature>
<feature type="strand" evidence="4">
    <location>
        <begin position="38"/>
        <end position="46"/>
    </location>
</feature>
<feature type="strand" evidence="6">
    <location>
        <begin position="48"/>
        <end position="51"/>
    </location>
</feature>
<feature type="strand" evidence="4">
    <location>
        <begin position="57"/>
        <end position="64"/>
    </location>
</feature>
<feature type="strand" evidence="7">
    <location>
        <begin position="72"/>
        <end position="74"/>
    </location>
</feature>
<feature type="strand" evidence="3">
    <location>
        <begin position="76"/>
        <end position="78"/>
    </location>
</feature>
<feature type="strand" evidence="6">
    <location>
        <begin position="79"/>
        <end position="81"/>
    </location>
</feature>
<feature type="strand" evidence="4">
    <location>
        <begin position="83"/>
        <end position="87"/>
    </location>
</feature>
<feature type="strand" evidence="6">
    <location>
        <begin position="89"/>
        <end position="91"/>
    </location>
</feature>
<feature type="strand" evidence="4">
    <location>
        <begin position="93"/>
        <end position="96"/>
    </location>
</feature>
<feature type="strand" evidence="4">
    <location>
        <begin position="100"/>
        <end position="103"/>
    </location>
</feature>
<feature type="helix" evidence="4">
    <location>
        <begin position="105"/>
        <end position="108"/>
    </location>
</feature>
<feature type="helix" evidence="4">
    <location>
        <begin position="112"/>
        <end position="117"/>
    </location>
</feature>
<feature type="strand" evidence="4">
    <location>
        <begin position="119"/>
        <end position="122"/>
    </location>
</feature>
<sequence>MIQQETRLKVADNSGAREVLTIKVLGGSGRKTANIGDVIVCTVKNATPGGVVKKGDVVKAVIVRTKSGVRRNDGSYIKFDENACVIIRDDKGPRGTRIFGPVARELREGNFMKIVSLAPEVL</sequence>
<protein>
    <recommendedName>
        <fullName evidence="1">Large ribosomal subunit protein uL14</fullName>
    </recommendedName>
    <alternativeName>
        <fullName evidence="2">50S ribosomal protein L14</fullName>
    </alternativeName>
</protein>
<gene>
    <name evidence="1" type="primary">rplN</name>
    <name type="ordered locus">SAOUHSC_02502</name>
</gene>
<keyword id="KW-0002">3D-structure</keyword>
<keyword id="KW-1185">Reference proteome</keyword>
<keyword id="KW-0687">Ribonucleoprotein</keyword>
<keyword id="KW-0689">Ribosomal protein</keyword>
<keyword id="KW-0694">RNA-binding</keyword>
<keyword id="KW-0699">rRNA-binding</keyword>
<reference key="1">
    <citation type="book" date="2006" name="Gram positive pathogens, 2nd edition">
        <title>The Staphylococcus aureus NCTC 8325 genome.</title>
        <editorList>
            <person name="Fischetti V."/>
            <person name="Novick R."/>
            <person name="Ferretti J."/>
            <person name="Portnoy D."/>
            <person name="Rood J."/>
        </editorList>
        <authorList>
            <person name="Gillaspy A.F."/>
            <person name="Worrell V."/>
            <person name="Orvis J."/>
            <person name="Roe B.A."/>
            <person name="Dyer D.W."/>
            <person name="Iandolo J.J."/>
        </authorList>
    </citation>
    <scope>NUCLEOTIDE SEQUENCE [LARGE SCALE GENOMIC DNA]</scope>
    <source>
        <strain>NCTC 8325 / PS 47</strain>
    </source>
</reference>